<keyword id="KW-0002">3D-structure</keyword>
<keyword id="KW-1003">Cell membrane</keyword>
<keyword id="KW-0968">Cytoplasmic vesicle</keyword>
<keyword id="KW-0903">Direct protein sequencing</keyword>
<keyword id="KW-0256">Endoplasmic reticulum</keyword>
<keyword id="KW-0931">ER-Golgi transport</keyword>
<keyword id="KW-0325">Glycoprotein</keyword>
<keyword id="KW-0333">Golgi apparatus</keyword>
<keyword id="KW-0472">Membrane</keyword>
<keyword id="KW-0488">Methylation</keyword>
<keyword id="KW-0653">Protein transport</keyword>
<keyword id="KW-1185">Reference proteome</keyword>
<keyword id="KW-0732">Signal</keyword>
<keyword id="KW-0812">Transmembrane</keyword>
<keyword id="KW-1133">Transmembrane helix</keyword>
<keyword id="KW-0813">Transport</keyword>
<organism>
    <name type="scientific">Rattus norvegicus</name>
    <name type="common">Rat</name>
    <dbReference type="NCBI Taxonomy" id="10116"/>
    <lineage>
        <taxon>Eukaryota</taxon>
        <taxon>Metazoa</taxon>
        <taxon>Chordata</taxon>
        <taxon>Craniata</taxon>
        <taxon>Vertebrata</taxon>
        <taxon>Euteleostomi</taxon>
        <taxon>Mammalia</taxon>
        <taxon>Eutheria</taxon>
        <taxon>Euarchontoglires</taxon>
        <taxon>Glires</taxon>
        <taxon>Rodentia</taxon>
        <taxon>Myomorpha</taxon>
        <taxon>Muroidea</taxon>
        <taxon>Muridae</taxon>
        <taxon>Murinae</taxon>
        <taxon>Rattus</taxon>
    </lineage>
</organism>
<name>TMEDA_RAT</name>
<protein>
    <recommendedName>
        <fullName>Transmembrane emp24 domain-containing protein 10</fullName>
        <shortName>Protein Tmed10</shortName>
    </recommendedName>
    <alternativeName>
        <fullName>21 kDa transmembrane-trafficking protein</fullName>
    </alternativeName>
    <alternativeName>
        <fullName>Transmembrane protein Tmp21</fullName>
    </alternativeName>
    <alternativeName>
        <fullName>p24 family protein delta-1</fullName>
        <shortName>p24delta1</shortName>
    </alternativeName>
</protein>
<comment type="function">
    <text evidence="2 3 6 12">Cargo receptor involved in protein vesicular trafficking and quality control in the endoplasmic reticulum (ER) and Golgi (By similarity). The p24 protein family is a group of transmembrane proteins that bind coat protein complex I/COPI and coat protein complex II/COPII involved in vesicular trafficking between the membranes (By similarity). Acts at the lumenal side for incorporation of secretory cargo molecules into transport vesicles and involved in vesicle coat formation at the cytoplasmic side (PubMed:10214941). Mainly functions in the early secretory pathway and cycles between the ER, ER-Golgi intermediate compartment (ERGIC) and Golgi, mediating cargo transport through COPI and COPII-coated vesicles (PubMed:10214941). In COPII vesicle-mediated anterograde transport, involved in the transport of GPI-anchored proteins by acting together with TMED2 as their cargo receptor; the function specifically implies SEC24C and SEC24D of the COPII vesicle coat and lipid raft-like microdomains of the ER (PubMed:27569046). Recognizes GPI anchors structural remodeled in the ER by the GPI inositol-deacylase/PGAP1 and the metallophosphoesterase MPPE1/PGAP5 (PubMed:27569046). In COPI vesicle-mediated retrograde transport, involved in the biogenesis of COPI vesicles and vesicle coat recruitment. Involved in trafficking of amyloid beta A4 protein and soluble APP-beta release (independent from the modulation of gamma-secretase activity) (By similarity). Involved in the KDELR2-mediated retrograde transport of the toxin A subunit (CTX-A-K63)together with COPI and the COOH terminus of KDELR2 (By similarity). On Golgi membranes, acts as a primary receptor for ARF1-GDP, a GTP-binding protein involved in COPI-vesicle formation. Increases coatomer-dependent GTPase-activating activity of ARFGAP2 which mediates the hydrolysis of ARF1-bound GTP and therefore modulates protein trafficking from the Golgi apparatus. Involved in the exocytic trafficking of G protein-coupled receptors F2LR1/PAR2 (trypsin and tryspin-like enzyme receptor), OPRM1 (opioid receptor) and P2RY4 (UTD and UDP receptor) from the Golgi to the plasma membrane, thus contributing to receptor resensitization. In addition to its cargo receptor activity, may also act as a protein channel after oligomerization, facilitating the post-translational entry of leaderless cytoplasmic cargo into the ERGIC. Involved in the translocation into ERGIC, the vesicle entry and the secretion of leaderless cargos (lacking the secretion signal sequence), including the mature form of interleukin 1/IL-1 family members, the alpha-crystallin B chain HSPB5, the carbohydrate-binding proteins galectin-1/LGALS1 and galectin-3/LGALS3, the microtubule-associated protein Tau/MAPT, and the annexin A1/ANXA1; the translocation process is dependent on cargo protein unfolding and enhanced by chaperones HSP90AB1 and HSP90B1/GRP9. Could also associates with the presenilin-dependent gamma-secretase complex in order to regulate gamma-cleavages of the amyloid beta A4 protein to yield amyloid-beta 40/Abeta40 (By similarity).</text>
</comment>
<comment type="subunit">
    <text evidence="2 3 6 7 11 12 14 15">Predominantly dimeric and to a lesser extent monomeric in the ER. Monomer and dimer in ERGIC and cis-Golgi network. Forms homooligomer (via GOLD domain); the assembly is promoted by direct binding with leaderless cargos and may form a protein channel that facilitates cargo entry into the ERGIC (By similarity). Forms heterooligomeric complexes with other members of the p24 family such as TMED2, TMED7 and TMED9 (PubMed:10214941, PubMed:11703931, PubMed:8663407). Interacts (via GOLD domain) with TMED2 (via GOLD domain); the complex is required for export of TMED10 from the ER to the cis-Golgi network; the complex is proposed to be involved in cis-Golgi network dynamics and / or biogenesis (PubMed:27569046). Associates with the COPI vesicle coat subunits (coatomer) (By similarity). Tetramerization of the cytoplasmic domain at the Golgi membrane in vitro; the complex is proposed to interact with COPI coatomer and induce budding of the vesicles (By similarity). Interacts with COPG1; the interaction involves TMED10 homodimer (By similarity). Interacts with ARF1 (GDP-bound); the interaction probably involves a TMED10 oligomer (PubMed:11703931). Interacts with SEC23A, SEC24B, SEC24C and SEC24D components of the coat protein complex II/COPII, indicative of an association of TMED10 with the COPII vesicle coat. Interacts with CD59 (PubMed:9472029). Interacts with MPPE1/PGAP5; the complex might recruit and sort GPI-anchored proteins to the ER-exit site, or the interaction might lead to recycling of PGAP5 between the ER and the Golgi. Interacts with F2LR1/PAR2 (By similarity). Interacts with KDELR2/ERD2; the interaction is disrupted by KDELR2 ligand (PubMed:11703931). Found in a complex composed at least of SURF4, TMED2 and TMED10 (By similarity). Associates with the presenilin-dependent gamma-secretase complex. Interacts with STX17; the interaction is direct (By similarity). Interacts with IL-1; the interaction is direct (PubMed:21545355). Interacts with RAB21 (active GTP-bound form); the interaction is indirect and regulates TMED10 abundance and localization at the Golgi (By similarity).</text>
</comment>
<comment type="interaction">
    <interactant intactId="EBI-918648">
        <id>Q63584</id>
    </interactant>
    <interactant intactId="EBI-4422912">
        <id>Q9R064</id>
        <label>Gorasp2</label>
    </interactant>
    <organismsDiffer>false</organismsDiffer>
    <experiments>2</experiments>
</comment>
<comment type="subcellular location">
    <subcellularLocation>
        <location evidence="15">Endoplasmic reticulum membrane</location>
        <topology evidence="4">Single-pass type I membrane protein</topology>
    </subcellularLocation>
    <subcellularLocation>
        <location evidence="2">Endoplasmic reticulum-Golgi intermediate compartment membrane</location>
        <topology evidence="4">Single-pass type I membrane protein</topology>
    </subcellularLocation>
    <subcellularLocation>
        <location evidence="6 9 10 15">Golgi apparatus membrane</location>
        <topology evidence="4">Single-pass type I membrane protein</topology>
    </subcellularLocation>
    <subcellularLocation>
        <location evidence="10 13 15">Golgi apparatus</location>
        <location evidence="10 13 15">cis-Golgi network membrane</location>
        <topology evidence="4">Single-pass type I membrane protein</topology>
    </subcellularLocation>
    <subcellularLocation>
        <location evidence="13">Golgi apparatus</location>
        <location evidence="13">trans-Golgi network membrane</location>
        <topology evidence="4">Single-pass type I membrane protein</topology>
    </subcellularLocation>
    <subcellularLocation>
        <location evidence="2">Cytoplasmic vesicle</location>
        <location evidence="2">Secretory vesicle membrane</location>
        <topology evidence="4">Single-pass type I membrane protein</topology>
    </subcellularLocation>
    <subcellularLocation>
        <location evidence="10">Cell membrane</location>
        <topology evidence="4">Single-pass type I membrane protein</topology>
    </subcellularLocation>
    <subcellularLocation>
        <location evidence="2">Melanosome</location>
    </subcellularLocation>
</comment>
<comment type="tissue specificity">
    <text evidence="14">Ubiquitous.</text>
</comment>
<comment type="domain">
    <text evidence="12">The GOLD domain is required for proper p24 heterooligomeric complex formation and efficient transport of GPI-anchored proteins.</text>
</comment>
<comment type="domain">
    <text evidence="10">The lumenal domain mediates localization to the plasma membrane by partially overriding the ER retention by the cytoplasmic domain.</text>
</comment>
<comment type="miscellaneous">
    <text evidence="2">Ectopic expression of TMED10 alone does not result in its proper cis-Golgi network localization. Interaction of TMED10 with TMED2 is both necessary and sufficient for transport of the couple to the cis-Golgi network, and TMED3 and/or TMED9 contribute to facilitating the process.</text>
</comment>
<comment type="similarity">
    <text evidence="16">Belongs to the EMP24/GP25L family.</text>
</comment>
<sequence>MSGLSGPLSWPGPLLSALLFLFLLGPSSVLGISFHLPVNSRKCLREEIHKDLLVTGAYEITDQSGGAGGLRTHLKITDSAGHILYAKEDATKGKFAFTTEDYDMFEVCFESKGTGRIPDQLVILDMKHGVEAKNYEEIAKVEKLKPLEVELRRLEDLSESIVNDFAYMKKREEEMRDTNESTNTRVLYFSIFSMFCLIGLATWQVFYLRRFFKAKKLIE</sequence>
<gene>
    <name evidence="18" type="primary">Tmed10</name>
    <name type="synonym">Tmp21</name>
</gene>
<reference key="1">
    <citation type="journal article" date="1999" name="DNA Seq.">
        <title>A comparative study of rat and human Tmp21 (p23) reveals the pseudogene-like features of human Tmp21-II.</title>
        <authorList>
            <person name="Hoerer J."/>
            <person name="Blum R."/>
            <person name="Feick P."/>
            <person name="Nastainczyk W."/>
            <person name="Schulz I."/>
        </authorList>
    </citation>
    <scope>NUCLEOTIDE SEQUENCE [MRNA]</scope>
    <source>
        <tissue>Pancreas</tissue>
    </source>
</reference>
<reference key="2">
    <citation type="journal article" date="1996" name="J. Biol. Chem.">
        <title>Tmp21 and p24A, two type I proteins enriched in pancreatic microsomal membranes, are members of a protein family involved in vesicular trafficking.</title>
        <authorList>
            <person name="Blum R."/>
            <person name="Feick P."/>
            <person name="Puype M."/>
            <person name="Vandekerckhove J."/>
            <person name="Klengel R."/>
            <person name="Nastainczyk W."/>
            <person name="Schulz I."/>
        </authorList>
    </citation>
    <scope>NUCLEOTIDE SEQUENCE [MRNA] OF 17-219</scope>
    <scope>TISSUE SPECIFICITY</scope>
    <scope>INTERACTION WITH TMED2</scope>
    <source>
        <strain>Wistar</strain>
        <tissue>Pancreas</tissue>
    </source>
</reference>
<reference key="3">
    <citation type="journal article" date="1998" name="J. Cell Biol.">
        <title>gp25L/emp24/p24 protein family members of the cis-Golgi network bind both COP I and II coatomer.</title>
        <authorList>
            <person name="Dominguez M."/>
            <person name="Dejgaard K."/>
            <person name="Fullekrug J."/>
            <person name="Dahan S."/>
            <person name="Fazel A."/>
            <person name="Paccaud J.P."/>
            <person name="Thomas D.Y."/>
            <person name="Bergeron J.J."/>
            <person name="Nilsson T."/>
        </authorList>
    </citation>
    <scope>PROTEIN SEQUENCE OF 32-47</scope>
    <scope>INTERACTION WITH TMED2</scope>
    <scope>SUBCELLULAR LOCATION</scope>
</reference>
<reference key="4">
    <citation type="journal article" date="1999" name="FEBS Lett.">
        <title>p24 and p23, the major transmembrane proteins of COPI-coated transport vesicles, form hetero-oligomeric complexes and cycle between the organelles of the early secretory pathway.</title>
        <authorList>
            <person name="Gommel D."/>
            <person name="Orci L."/>
            <person name="Emig E.M."/>
            <person name="Hannah M.J."/>
            <person name="Ravazzola M."/>
            <person name="Nickel W."/>
            <person name="Helms J.B."/>
            <person name="Wieland F.T."/>
            <person name="Sohn K."/>
        </authorList>
    </citation>
    <scope>FUNCTION</scope>
    <scope>SUBCELLULAR LOCATION</scope>
    <scope>INTERACTION WITH TMED2</scope>
</reference>
<reference key="5">
    <citation type="journal article" date="2001" name="Dev. Cell">
        <title>KDEL-cargo regulates interactions between proteins involved in COPI vesicle traffic: measurements in living cells using FRET.</title>
        <authorList>
            <person name="Majoul I."/>
            <person name="Straub M."/>
            <person name="Hell S.W."/>
            <person name="Duden R."/>
            <person name="Soling H.D."/>
        </authorList>
    </citation>
    <scope>INTERACTION WITH KDELR2; TMED2 AND ARF1</scope>
</reference>
<reference key="6">
    <citation type="journal article" date="2004" name="Mol. Biol. Cell">
        <title>Organellar proteomics reveals Golgi arginine dimethylation.</title>
        <authorList>
            <person name="Wu C.C."/>
            <person name="MacCoss M.J."/>
            <person name="Mardones G."/>
            <person name="Finnigan C."/>
            <person name="Mogelsvang S."/>
            <person name="Yates J.R. III"/>
            <person name="Howell K.E."/>
        </authorList>
    </citation>
    <scope>METHYLATION AT ARG-171 AND ARG-176</scope>
    <scope>IDENTIFICATION BY MASS SPECTROMETRY</scope>
</reference>
<reference key="7">
    <citation type="journal article" date="2005" name="Science">
        <title>Golgin tethers define subpopulations of COPI vesicles.</title>
        <authorList>
            <person name="Malsam J."/>
            <person name="Satoh A."/>
            <person name="Pelletier L."/>
            <person name="Warren G."/>
        </authorList>
    </citation>
    <scope>SUBCELLULAR LOCATION</scope>
</reference>
<reference key="8">
    <citation type="journal article" date="2008" name="Traffic">
        <title>The luminal domain of p23 (Tmp21) plays a critical role in p23 cell surface trafficking.</title>
        <authorList>
            <person name="Blum R."/>
            <person name="Lepier A."/>
        </authorList>
    </citation>
    <scope>SUBCELLULAR LOCATION</scope>
    <scope>TOPOLOGY</scope>
    <scope>MUTAGENESIS OF 215-LYS-LYS-216</scope>
</reference>
<reference key="9">
    <citation type="journal article" date="2011" name="Biol. Cell">
        <title>Syntaxin 17 cycles between the ER and ERGIC and is required to maintain the architecture of ERGIC and Golgi.</title>
        <authorList>
            <person name="Muppirala M."/>
            <person name="Gupta V."/>
            <person name="Swarup G."/>
        </authorList>
    </citation>
    <scope>INTERACTION WITH STX17</scope>
</reference>
<reference key="10">
    <citation type="journal article" date="2019" name="Biol. Open">
        <title>RAB21 interacts with TMED10 and modulates its localization and abundance.</title>
        <authorList>
            <person name="Del Olmo T."/>
            <person name="Lacarriere-Keita C."/>
            <person name="Normandin C."/>
            <person name="Jean D."/>
            <person name="Boisvert F.M."/>
            <person name="Jean S."/>
        </authorList>
    </citation>
    <scope>SUBCELLULAR LOCATION</scope>
</reference>
<reference key="11">
    <citation type="journal article" date="2016" name="J. Mol. Biol.">
        <title>3D structure and interaction of p24beta and p24delta golgi dynamics domains: implication for p24 complex formation and cargo transport.</title>
        <authorList>
            <person name="Nagae M."/>
            <person name="Hirata T."/>
            <person name="Morita-Matsumoto K."/>
            <person name="Theiler R."/>
            <person name="Fujita M."/>
            <person name="Kinoshita T."/>
            <person name="Yamaguchi Y."/>
        </authorList>
    </citation>
    <scope>X-RAY CRYSTALLOGRAPHY (1.58 ANGSTROMS) OF 12-132</scope>
    <scope>FUNCTION IN TRANSPORT OF GPI-ANCHORED PROTEINS</scope>
    <scope>INTERACTION WITH TMED2</scope>
</reference>
<accession>Q63584</accession>
<accession>Q9R0W6</accession>
<evidence type="ECO:0000250" key="1"/>
<evidence type="ECO:0000250" key="2">
    <source>
        <dbReference type="UniProtKB" id="P49755"/>
    </source>
</evidence>
<evidence type="ECO:0000250" key="3">
    <source>
        <dbReference type="UniProtKB" id="Q28735"/>
    </source>
</evidence>
<evidence type="ECO:0000255" key="4"/>
<evidence type="ECO:0000255" key="5">
    <source>
        <dbReference type="PROSITE-ProRule" id="PRU00096"/>
    </source>
</evidence>
<evidence type="ECO:0000269" key="6">
    <source>
    </source>
</evidence>
<evidence type="ECO:0000269" key="7">
    <source>
    </source>
</evidence>
<evidence type="ECO:0000269" key="8">
    <source>
    </source>
</evidence>
<evidence type="ECO:0000269" key="9">
    <source>
    </source>
</evidence>
<evidence type="ECO:0000269" key="10">
    <source>
    </source>
</evidence>
<evidence type="ECO:0000269" key="11">
    <source>
    </source>
</evidence>
<evidence type="ECO:0000269" key="12">
    <source>
    </source>
</evidence>
<evidence type="ECO:0000269" key="13">
    <source>
    </source>
</evidence>
<evidence type="ECO:0000269" key="14">
    <source>
    </source>
</evidence>
<evidence type="ECO:0000269" key="15">
    <source>
    </source>
</evidence>
<evidence type="ECO:0000305" key="16"/>
<evidence type="ECO:0000305" key="17">
    <source>
    </source>
</evidence>
<evidence type="ECO:0000312" key="18">
    <source>
        <dbReference type="PROSITE" id="PS50866"/>
    </source>
</evidence>
<evidence type="ECO:0007829" key="19">
    <source>
        <dbReference type="PDB" id="5AZX"/>
    </source>
</evidence>
<feature type="signal peptide" evidence="1">
    <location>
        <begin position="1"/>
        <end position="31"/>
    </location>
</feature>
<feature type="chain" id="PRO_0000010404" description="Transmembrane emp24 domain-containing protein 10">
    <location>
        <begin position="32"/>
        <end position="219"/>
    </location>
</feature>
<feature type="topological domain" description="Lumenal" evidence="17">
    <location>
        <begin position="32"/>
        <end position="185"/>
    </location>
</feature>
<feature type="transmembrane region" description="Helical" evidence="4">
    <location>
        <begin position="186"/>
        <end position="206"/>
    </location>
</feature>
<feature type="topological domain" description="Cytoplasmic" evidence="17">
    <location>
        <begin position="207"/>
        <end position="219"/>
    </location>
</feature>
<feature type="domain" description="GOLD" evidence="5">
    <location>
        <begin position="41"/>
        <end position="193"/>
    </location>
</feature>
<feature type="region of interest" description="Required for interaction with STX17" evidence="1">
    <location>
        <begin position="1"/>
        <end position="142"/>
    </location>
</feature>
<feature type="region of interest" description="Required for TMED10 and TMED2 cis-Golgi network localization" evidence="1">
    <location>
        <begin position="147"/>
        <end position="178"/>
    </location>
</feature>
<feature type="region of interest" description="Interaction with COPG1" evidence="1">
    <location>
        <begin position="204"/>
        <end position="219"/>
    </location>
</feature>
<feature type="region of interest" description="Interaction with ARF1 and IL1B" evidence="2">
    <location>
        <begin position="207"/>
        <end position="219"/>
    </location>
</feature>
<feature type="short sequence motif" description="COPI vesicle coat-binding" evidence="4">
    <location>
        <begin position="211"/>
        <end position="219"/>
    </location>
</feature>
<feature type="short sequence motif" description="COPII vesicle coat-binding" evidence="4">
    <location>
        <begin position="211"/>
        <end position="212"/>
    </location>
</feature>
<feature type="modified residue" description="Dimethylated arginine" evidence="8">
    <location>
        <position position="171"/>
    </location>
</feature>
<feature type="modified residue" description="Dimethylated arginine" evidence="8">
    <location>
        <position position="176"/>
    </location>
</feature>
<feature type="glycosylation site" description="N-linked (GlcNAc...) asparagine" evidence="4">
    <location>
        <position position="179"/>
    </location>
</feature>
<feature type="mutagenesis site" description="Reduced localization to COPI-coated vesicles and endoplasmic reticulum-Golgi intermediate compartment." evidence="10">
    <original>KK</original>
    <variation>SS</variation>
    <location>
        <begin position="215"/>
        <end position="216"/>
    </location>
</feature>
<feature type="strand" evidence="19">
    <location>
        <begin position="32"/>
        <end position="36"/>
    </location>
</feature>
<feature type="strand" evidence="19">
    <location>
        <begin position="41"/>
        <end position="47"/>
    </location>
</feature>
<feature type="strand" evidence="19">
    <location>
        <begin position="53"/>
        <end position="61"/>
    </location>
</feature>
<feature type="helix" evidence="19">
    <location>
        <begin position="67"/>
        <end position="69"/>
    </location>
</feature>
<feature type="strand" evidence="19">
    <location>
        <begin position="71"/>
        <end position="78"/>
    </location>
</feature>
<feature type="strand" evidence="19">
    <location>
        <begin position="83"/>
        <end position="89"/>
    </location>
</feature>
<feature type="strand" evidence="19">
    <location>
        <begin position="91"/>
        <end position="98"/>
    </location>
</feature>
<feature type="strand" evidence="19">
    <location>
        <begin position="104"/>
        <end position="112"/>
    </location>
</feature>
<feature type="strand" evidence="19">
    <location>
        <begin position="120"/>
        <end position="128"/>
    </location>
</feature>
<dbReference type="EMBL" id="AJ004912">
    <property type="protein sequence ID" value="CAA06212.1"/>
    <property type="molecule type" value="mRNA"/>
</dbReference>
<dbReference type="EMBL" id="X97443">
    <property type="protein sequence ID" value="CAA66072.1"/>
    <property type="molecule type" value="mRNA"/>
</dbReference>
<dbReference type="RefSeq" id="NP_445919.1">
    <property type="nucleotide sequence ID" value="NM_053467.1"/>
</dbReference>
<dbReference type="PDB" id="5AZX">
    <property type="method" value="X-ray"/>
    <property type="resolution" value="1.58 A"/>
    <property type="chains" value="A/B/C/D=32-132"/>
</dbReference>
<dbReference type="PDB" id="5AZY">
    <property type="method" value="X-ray"/>
    <property type="resolution" value="1.80 A"/>
    <property type="chains" value="A/B=32-132"/>
</dbReference>
<dbReference type="PDBsum" id="5AZX"/>
<dbReference type="PDBsum" id="5AZY"/>
<dbReference type="SMR" id="Q63584"/>
<dbReference type="BioGRID" id="250029">
    <property type="interactions" value="1"/>
</dbReference>
<dbReference type="FunCoup" id="Q63584">
    <property type="interactions" value="3372"/>
</dbReference>
<dbReference type="IntAct" id="Q63584">
    <property type="interactions" value="8"/>
</dbReference>
<dbReference type="STRING" id="10116.ENSRNOP00000010512"/>
<dbReference type="GlyCosmos" id="Q63584">
    <property type="glycosylation" value="1 site, No reported glycans"/>
</dbReference>
<dbReference type="GlyGen" id="Q63584">
    <property type="glycosylation" value="1 site"/>
</dbReference>
<dbReference type="iPTMnet" id="Q63584"/>
<dbReference type="PhosphoSitePlus" id="Q63584"/>
<dbReference type="SwissPalm" id="Q63584"/>
<dbReference type="jPOST" id="Q63584"/>
<dbReference type="PaxDb" id="10116-ENSRNOP00000010512"/>
<dbReference type="GeneID" id="84599"/>
<dbReference type="KEGG" id="rno:84599"/>
<dbReference type="UCSC" id="RGD:620970">
    <property type="organism name" value="rat"/>
</dbReference>
<dbReference type="AGR" id="RGD:620970"/>
<dbReference type="CTD" id="10972"/>
<dbReference type="RGD" id="620970">
    <property type="gene designation" value="Tmed10"/>
</dbReference>
<dbReference type="VEuPathDB" id="HostDB:ENSRNOG00000007901"/>
<dbReference type="eggNOG" id="KOG1691">
    <property type="taxonomic scope" value="Eukaryota"/>
</dbReference>
<dbReference type="HOGENOM" id="CLU_066963_3_1_1"/>
<dbReference type="InParanoid" id="Q63584"/>
<dbReference type="OrthoDB" id="20735at9989"/>
<dbReference type="PhylomeDB" id="Q63584"/>
<dbReference type="Reactome" id="R-RNO-204005">
    <property type="pathway name" value="COPII-mediated vesicle transport"/>
</dbReference>
<dbReference type="Reactome" id="R-RNO-5694530">
    <property type="pathway name" value="Cargo concentration in the ER"/>
</dbReference>
<dbReference type="Reactome" id="R-RNO-6807878">
    <property type="pathway name" value="COPI-mediated anterograde transport"/>
</dbReference>
<dbReference type="Reactome" id="R-RNO-6811434">
    <property type="pathway name" value="COPI-dependent Golgi-to-ER retrograde traffic"/>
</dbReference>
<dbReference type="PRO" id="PR:Q63584"/>
<dbReference type="Proteomes" id="UP000002494">
    <property type="component" value="Chromosome 6"/>
</dbReference>
<dbReference type="Bgee" id="ENSRNOG00000007901">
    <property type="expression patterns" value="Expressed in pancreas and 20 other cell types or tissues"/>
</dbReference>
<dbReference type="GO" id="GO:0005801">
    <property type="term" value="C:cis-Golgi network"/>
    <property type="evidence" value="ECO:0000314"/>
    <property type="project" value="HGNC-UCL"/>
</dbReference>
<dbReference type="GO" id="GO:0030137">
    <property type="term" value="C:COPI-coated vesicle"/>
    <property type="evidence" value="ECO:0000314"/>
    <property type="project" value="RGD"/>
</dbReference>
<dbReference type="GO" id="GO:0030134">
    <property type="term" value="C:COPII-coated ER to Golgi transport vesicle"/>
    <property type="evidence" value="ECO:0000318"/>
    <property type="project" value="GO_Central"/>
</dbReference>
<dbReference type="GO" id="GO:0005783">
    <property type="term" value="C:endoplasmic reticulum"/>
    <property type="evidence" value="ECO:0000266"/>
    <property type="project" value="RGD"/>
</dbReference>
<dbReference type="GO" id="GO:0005789">
    <property type="term" value="C:endoplasmic reticulum membrane"/>
    <property type="evidence" value="ECO:0007669"/>
    <property type="project" value="UniProtKB-SubCell"/>
</dbReference>
<dbReference type="GO" id="GO:0005793">
    <property type="term" value="C:endoplasmic reticulum-Golgi intermediate compartment"/>
    <property type="evidence" value="ECO:0000314"/>
    <property type="project" value="RGD"/>
</dbReference>
<dbReference type="GO" id="GO:0033116">
    <property type="term" value="C:endoplasmic reticulum-Golgi intermediate compartment membrane"/>
    <property type="evidence" value="ECO:0007669"/>
    <property type="project" value="UniProtKB-SubCell"/>
</dbReference>
<dbReference type="GO" id="GO:0070765">
    <property type="term" value="C:gamma-secretase complex"/>
    <property type="evidence" value="ECO:0000314"/>
    <property type="project" value="RGD"/>
</dbReference>
<dbReference type="GO" id="GO:0005794">
    <property type="term" value="C:Golgi apparatus"/>
    <property type="evidence" value="ECO:0000318"/>
    <property type="project" value="GO_Central"/>
</dbReference>
<dbReference type="GO" id="GO:0000139">
    <property type="term" value="C:Golgi membrane"/>
    <property type="evidence" value="ECO:0000314"/>
    <property type="project" value="UniProtKB"/>
</dbReference>
<dbReference type="GO" id="GO:0042470">
    <property type="term" value="C:melanosome"/>
    <property type="evidence" value="ECO:0007669"/>
    <property type="project" value="UniProtKB-SubCell"/>
</dbReference>
<dbReference type="GO" id="GO:0016020">
    <property type="term" value="C:membrane"/>
    <property type="evidence" value="ECO:0000314"/>
    <property type="project" value="HGNC-UCL"/>
</dbReference>
<dbReference type="GO" id="GO:0005886">
    <property type="term" value="C:plasma membrane"/>
    <property type="evidence" value="ECO:0000314"/>
    <property type="project" value="UniProtKB"/>
</dbReference>
<dbReference type="GO" id="GO:0030667">
    <property type="term" value="C:secretory granule membrane"/>
    <property type="evidence" value="ECO:0000250"/>
    <property type="project" value="UniProtKB"/>
</dbReference>
<dbReference type="GO" id="GO:0030140">
    <property type="term" value="C:trans-Golgi network transport vesicle"/>
    <property type="evidence" value="ECO:0000250"/>
    <property type="project" value="UniProtKB"/>
</dbReference>
<dbReference type="GO" id="GO:0030658">
    <property type="term" value="C:transport vesicle membrane"/>
    <property type="evidence" value="ECO:0007669"/>
    <property type="project" value="UniProtKB-SubCell"/>
</dbReference>
<dbReference type="GO" id="GO:0042589">
    <property type="term" value="C:zymogen granule membrane"/>
    <property type="evidence" value="ECO:0000314"/>
    <property type="project" value="HGNC-UCL"/>
</dbReference>
<dbReference type="GO" id="GO:0008320">
    <property type="term" value="F:protein transmembrane transporter activity"/>
    <property type="evidence" value="ECO:0000250"/>
    <property type="project" value="UniProtKB"/>
</dbReference>
<dbReference type="GO" id="GO:0044877">
    <property type="term" value="F:protein-containing complex binding"/>
    <property type="evidence" value="ECO:0000314"/>
    <property type="project" value="RGD"/>
</dbReference>
<dbReference type="GO" id="GO:0019905">
    <property type="term" value="F:syntaxin binding"/>
    <property type="evidence" value="ECO:0000266"/>
    <property type="project" value="RGD"/>
</dbReference>
<dbReference type="GO" id="GO:0035964">
    <property type="term" value="P:COPI-coated vesicle budding"/>
    <property type="evidence" value="ECO:0000250"/>
    <property type="project" value="UniProtKB"/>
</dbReference>
<dbReference type="GO" id="GO:0106273">
    <property type="term" value="P:cytosol to ERGIC protein transport"/>
    <property type="evidence" value="ECO:0000250"/>
    <property type="project" value="UniProtKB"/>
</dbReference>
<dbReference type="GO" id="GO:0006888">
    <property type="term" value="P:endoplasmic reticulum to Golgi vesicle-mediated transport"/>
    <property type="evidence" value="ECO:0000318"/>
    <property type="project" value="GO_Central"/>
</dbReference>
<dbReference type="GO" id="GO:0007030">
    <property type="term" value="P:Golgi organization"/>
    <property type="evidence" value="ECO:0000315"/>
    <property type="project" value="RGD"/>
</dbReference>
<dbReference type="GO" id="GO:0006886">
    <property type="term" value="P:intracellular protein transport"/>
    <property type="evidence" value="ECO:0000266"/>
    <property type="project" value="RGD"/>
</dbReference>
<dbReference type="GO" id="GO:0001822">
    <property type="term" value="P:kidney development"/>
    <property type="evidence" value="ECO:0000270"/>
    <property type="project" value="RGD"/>
</dbReference>
<dbReference type="GO" id="GO:0032732">
    <property type="term" value="P:positive regulation of interleukin-1 production"/>
    <property type="evidence" value="ECO:0000250"/>
    <property type="project" value="UniProtKB"/>
</dbReference>
<dbReference type="GO" id="GO:0050714">
    <property type="term" value="P:positive regulation of protein secretion"/>
    <property type="evidence" value="ECO:0000250"/>
    <property type="project" value="UniProtKB"/>
</dbReference>
<dbReference type="GO" id="GO:0106272">
    <property type="term" value="P:protein localization to ERGIC"/>
    <property type="evidence" value="ECO:0000250"/>
    <property type="project" value="UniProtKB"/>
</dbReference>
<dbReference type="GO" id="GO:0045055">
    <property type="term" value="P:regulated exocytosis"/>
    <property type="evidence" value="ECO:0000270"/>
    <property type="project" value="HGNC-UCL"/>
</dbReference>
<dbReference type="GO" id="GO:1902003">
    <property type="term" value="P:regulation of amyloid-beta formation"/>
    <property type="evidence" value="ECO:0000250"/>
    <property type="project" value="UniProtKB"/>
</dbReference>
<dbReference type="GO" id="GO:0043279">
    <property type="term" value="P:response to alkaloid"/>
    <property type="evidence" value="ECO:0000270"/>
    <property type="project" value="RGD"/>
</dbReference>
<dbReference type="GO" id="GO:0006890">
    <property type="term" value="P:retrograde vesicle-mediated transport, Golgi to endoplasmic reticulum"/>
    <property type="evidence" value="ECO:0000250"/>
    <property type="project" value="UniProtKB"/>
</dbReference>
<dbReference type="GO" id="GO:0006903">
    <property type="term" value="P:vesicle targeting"/>
    <property type="evidence" value="ECO:0000303"/>
    <property type="project" value="HGNC-UCL"/>
</dbReference>
<dbReference type="GO" id="GO:0048199">
    <property type="term" value="P:vesicle targeting, to, from or within Golgi"/>
    <property type="evidence" value="ECO:0000270"/>
    <property type="project" value="HGNC-UCL"/>
</dbReference>
<dbReference type="InterPro" id="IPR015720">
    <property type="entry name" value="Emp24-like"/>
</dbReference>
<dbReference type="InterPro" id="IPR009038">
    <property type="entry name" value="GOLD_dom"/>
</dbReference>
<dbReference type="PANTHER" id="PTHR22811">
    <property type="entry name" value="TRANSMEMBRANE EMP24 DOMAIN-CONTAINING PROTEIN"/>
    <property type="match status" value="1"/>
</dbReference>
<dbReference type="Pfam" id="PF01105">
    <property type="entry name" value="EMP24_GP25L"/>
    <property type="match status" value="1"/>
</dbReference>
<dbReference type="SMART" id="SM01190">
    <property type="entry name" value="EMP24_GP25L"/>
    <property type="match status" value="1"/>
</dbReference>
<dbReference type="PROSITE" id="PS50866">
    <property type="entry name" value="GOLD"/>
    <property type="match status" value="1"/>
</dbReference>
<proteinExistence type="evidence at protein level"/>